<evidence type="ECO:0000250" key="1"/>
<evidence type="ECO:0000305" key="2"/>
<protein>
    <recommendedName>
        <fullName>Nuclear shuttle protein</fullName>
        <shortName>NSP</shortName>
    </recommendedName>
    <alternativeName>
        <fullName>Protein BR1</fullName>
    </alternativeName>
    <alternativeName>
        <fullName>Protein BV1</fullName>
    </alternativeName>
</protein>
<accession>Q06927</accession>
<dbReference type="EMBL" id="X70419">
    <property type="protein sequence ID" value="CAA49860.1"/>
    <property type="molecule type" value="Genomic_DNA"/>
</dbReference>
<dbReference type="PIR" id="JQ2304">
    <property type="entry name" value="JQ2304"/>
</dbReference>
<dbReference type="PIR" id="S31872">
    <property type="entry name" value="S31872"/>
</dbReference>
<dbReference type="RefSeq" id="NP_040354.1">
    <property type="nucleotide sequence ID" value="NC_001369.1"/>
</dbReference>
<dbReference type="GeneID" id="988148"/>
<dbReference type="KEGG" id="vg:988148"/>
<dbReference type="OrthoDB" id="8326at10239"/>
<dbReference type="Proteomes" id="UP000002321">
    <property type="component" value="Genome"/>
</dbReference>
<dbReference type="GO" id="GO:0043657">
    <property type="term" value="C:host cell"/>
    <property type="evidence" value="ECO:0007669"/>
    <property type="project" value="InterPro"/>
</dbReference>
<dbReference type="GO" id="GO:0030430">
    <property type="term" value="C:host cell cytoplasm"/>
    <property type="evidence" value="ECO:0007669"/>
    <property type="project" value="UniProtKB-SubCell"/>
</dbReference>
<dbReference type="GO" id="GO:0042025">
    <property type="term" value="C:host cell nucleus"/>
    <property type="evidence" value="ECO:0007669"/>
    <property type="project" value="UniProtKB-SubCell"/>
</dbReference>
<dbReference type="GO" id="GO:0020002">
    <property type="term" value="C:host cell plasma membrane"/>
    <property type="evidence" value="ECO:0007669"/>
    <property type="project" value="UniProtKB-SubCell"/>
</dbReference>
<dbReference type="GO" id="GO:0016020">
    <property type="term" value="C:membrane"/>
    <property type="evidence" value="ECO:0007669"/>
    <property type="project" value="UniProtKB-KW"/>
</dbReference>
<dbReference type="GO" id="GO:0019028">
    <property type="term" value="C:viral capsid"/>
    <property type="evidence" value="ECO:0007669"/>
    <property type="project" value="InterPro"/>
</dbReference>
<dbReference type="GO" id="GO:0003697">
    <property type="term" value="F:single-stranded DNA binding"/>
    <property type="evidence" value="ECO:0007669"/>
    <property type="project" value="InterPro"/>
</dbReference>
<dbReference type="GO" id="GO:0005198">
    <property type="term" value="F:structural molecule activity"/>
    <property type="evidence" value="ECO:0007669"/>
    <property type="project" value="InterPro"/>
</dbReference>
<dbReference type="GO" id="GO:0051027">
    <property type="term" value="P:DNA transport"/>
    <property type="evidence" value="ECO:0007669"/>
    <property type="project" value="InterPro"/>
</dbReference>
<dbReference type="GO" id="GO:0046740">
    <property type="term" value="P:transport of virus in host, cell to cell"/>
    <property type="evidence" value="ECO:0007669"/>
    <property type="project" value="UniProtKB-KW"/>
</dbReference>
<dbReference type="Gene3D" id="2.60.120.20">
    <property type="match status" value="1"/>
</dbReference>
<dbReference type="InterPro" id="IPR001530">
    <property type="entry name" value="Gemini_BR1"/>
</dbReference>
<dbReference type="InterPro" id="IPR000263">
    <property type="entry name" value="GV_A/BR1_coat"/>
</dbReference>
<dbReference type="InterPro" id="IPR029053">
    <property type="entry name" value="Viral_coat"/>
</dbReference>
<dbReference type="Pfam" id="PF00844">
    <property type="entry name" value="Gemini_coat"/>
    <property type="match status" value="1"/>
</dbReference>
<dbReference type="PRINTS" id="PR00223">
    <property type="entry name" value="GEMCOATARBR1"/>
</dbReference>
<dbReference type="PRINTS" id="PR00225">
    <property type="entry name" value="GEMCOATBR1"/>
</dbReference>
<organism>
    <name type="scientific">Pepper huasteco yellow vein virus</name>
    <name type="common">PHYVV</name>
    <name type="synonym">Pepper huasteco virus</name>
    <dbReference type="NCBI Taxonomy" id="223303"/>
    <lineage>
        <taxon>Viruses</taxon>
        <taxon>Monodnaviria</taxon>
        <taxon>Shotokuvirae</taxon>
        <taxon>Cressdnaviricota</taxon>
        <taxon>Repensiviricetes</taxon>
        <taxon>Geplafuvirales</taxon>
        <taxon>Geminiviridae</taxon>
        <taxon>Begomovirus</taxon>
    </lineage>
</organism>
<organismHost>
    <name type="scientific">Capsicum annuum</name>
    <name type="common">Capsicum pepper</name>
    <dbReference type="NCBI Taxonomy" id="4072"/>
</organismHost>
<comment type="function">
    <text evidence="1">Binds to the genomic viral ssDNA, shuttles it into and out of the cell nucleus. Begomoviruses use 2 proteins to transport their DNA from cell to cell. The nuclear shuttle protein (NSP) shuttles it between nucleus and cytoplasm and the movement protein (MP) probably transports the DNA-NSP complex to the cell periphery and facilitates movement across the cell wall (By similarity).</text>
</comment>
<comment type="subunit">
    <text evidence="1">Binds to single-stranded and double-stranded viral DNA. Interacts with the host nuclear shuttle interacting (NSI) protein. This interaction may allow NSP to recruit NSI monomers to the viral genome and thus regulate nuclear export of viral genome by NSP (By similarity).</text>
</comment>
<comment type="subcellular location">
    <subcellularLocation>
        <location evidence="1">Host nucleus</location>
    </subcellularLocation>
    <subcellularLocation>
        <location evidence="1">Host cytoplasm</location>
    </subcellularLocation>
    <subcellularLocation>
        <location evidence="1">Host cell membrane</location>
        <topology evidence="1">Peripheral membrane protein</topology>
        <orientation evidence="1">Cytoplasmic side</orientation>
    </subcellularLocation>
    <text evidence="1">Translocated to the plasma membrane by the movement protein BC1.</text>
</comment>
<comment type="similarity">
    <text evidence="2">Belongs to the begomovirus nuclear shuttle protein family.</text>
</comment>
<feature type="chain" id="PRO_0000222265" description="Nuclear shuttle protein">
    <location>
        <begin position="1"/>
        <end position="256"/>
    </location>
</feature>
<feature type="region of interest" description="Interaction with Arabidopsis thaliana NSI protein" evidence="1">
    <location>
        <begin position="150"/>
        <end position="187"/>
    </location>
</feature>
<feature type="short sequence motif" description="Bipartite nuclear localization signal" evidence="1">
    <location>
        <begin position="21"/>
        <end position="42"/>
    </location>
</feature>
<feature type="short sequence motif" description="Nuclear localization signal" evidence="1">
    <location>
        <begin position="81"/>
        <end position="96"/>
    </location>
</feature>
<gene>
    <name type="ORF">BR1</name>
    <name type="ORF">BV1</name>
</gene>
<name>NSP_PHUV</name>
<reference key="1">
    <citation type="journal article" date="1993" name="J. Gen. Virol.">
        <title>Complete nucleotide sequence of pepper huasteco virus: analysis and comparison with bipartite geminiviruses.</title>
        <authorList>
            <person name="Torres-Pacheco I."/>
            <person name="Garzon-Tiznado J.A."/>
            <person name="Herrera-Estrella L."/>
            <person name="Rivera-Bustamante R.F."/>
        </authorList>
    </citation>
    <scope>NUCLEOTIDE SEQUENCE [GENOMIC DNA]</scope>
</reference>
<keyword id="KW-0238">DNA-binding</keyword>
<keyword id="KW-1032">Host cell membrane</keyword>
<keyword id="KW-1035">Host cytoplasm</keyword>
<keyword id="KW-1043">Host membrane</keyword>
<keyword id="KW-1048">Host nucleus</keyword>
<keyword id="KW-0945">Host-virus interaction</keyword>
<keyword id="KW-0472">Membrane</keyword>
<keyword id="KW-1185">Reference proteome</keyword>
<keyword id="KW-0813">Transport</keyword>
<keyword id="KW-0916">Viral movement protein</keyword>
<proteinExistence type="inferred from homology"/>
<sequence>MYSTRFRRGLSYVPRRYNPRNYGFKRTFVVKRGDAKRRQTQVKKLTEDVKMSSQRIHENQYGPEFVMAHNTAISTFINYPQLCKTQPNRSRSYIKLKSLHFKGTLKIERVGSEVNMAGLNPKIEGVFTVVLVVDRKPHLNPTGNLLQFDELFGARIHSLGNLAVTPALKERFYILHVLKRVISVEKDSMMLDLEGSTCLSSRRYNCWSTFKDLDPSSCNGVYDNISKNAILVYYCWMSDAMSKASTFVSFDLDYFG</sequence>